<organism>
    <name type="scientific">Rattus norvegicus</name>
    <name type="common">Rat</name>
    <dbReference type="NCBI Taxonomy" id="10116"/>
    <lineage>
        <taxon>Eukaryota</taxon>
        <taxon>Metazoa</taxon>
        <taxon>Chordata</taxon>
        <taxon>Craniata</taxon>
        <taxon>Vertebrata</taxon>
        <taxon>Euteleostomi</taxon>
        <taxon>Mammalia</taxon>
        <taxon>Eutheria</taxon>
        <taxon>Euarchontoglires</taxon>
        <taxon>Glires</taxon>
        <taxon>Rodentia</taxon>
        <taxon>Myomorpha</taxon>
        <taxon>Muroidea</taxon>
        <taxon>Muridae</taxon>
        <taxon>Murinae</taxon>
        <taxon>Rattus</taxon>
    </lineage>
</organism>
<evidence type="ECO:0000250" key="1">
    <source>
        <dbReference type="UniProtKB" id="P00450"/>
    </source>
</evidence>
<evidence type="ECO:0000255" key="2"/>
<evidence type="ECO:0000269" key="3">
    <source>
    </source>
</evidence>
<evidence type="ECO:0000305" key="4"/>
<evidence type="ECO:0007829" key="5">
    <source>
        <dbReference type="PDB" id="5N0K"/>
    </source>
</evidence>
<evidence type="ECO:0007829" key="6">
    <source>
        <dbReference type="PDB" id="5N4L"/>
    </source>
</evidence>
<feature type="signal peptide" evidence="4">
    <location>
        <begin position="1"/>
        <end position="19"/>
    </location>
</feature>
<feature type="chain" id="PRO_0000002914" description="Ceruloplasmin">
    <location>
        <begin position="20"/>
        <end position="1059"/>
    </location>
</feature>
<feature type="domain" description="Plastocyanin-like 1" evidence="1">
    <location>
        <begin position="20"/>
        <end position="199"/>
    </location>
</feature>
<feature type="domain" description="Plastocyanin-like 2" evidence="1">
    <location>
        <begin position="208"/>
        <end position="356"/>
    </location>
</feature>
<feature type="domain" description="Plastocyanin-like 3" evidence="1">
    <location>
        <begin position="369"/>
        <end position="554"/>
    </location>
</feature>
<feature type="domain" description="Plastocyanin-like 4" evidence="1">
    <location>
        <begin position="564"/>
        <end position="712"/>
    </location>
</feature>
<feature type="domain" description="Plastocyanin-like 5" evidence="1">
    <location>
        <begin position="724"/>
        <end position="894"/>
    </location>
</feature>
<feature type="domain" description="Plastocyanin-like 6" evidence="1">
    <location>
        <begin position="902"/>
        <end position="1055"/>
    </location>
</feature>
<feature type="active site" description="Nucleophile; for glutathione peroxidase activity" evidence="1">
    <location>
        <position position="693"/>
    </location>
</feature>
<feature type="binding site" evidence="1">
    <location>
        <position position="55"/>
    </location>
    <ligand>
        <name>Na(+)</name>
        <dbReference type="ChEBI" id="CHEBI:29101"/>
        <label>1</label>
    </ligand>
</feature>
<feature type="binding site" evidence="1">
    <location>
        <position position="64"/>
    </location>
    <ligand>
        <name>Na(+)</name>
        <dbReference type="ChEBI" id="CHEBI:29101"/>
        <label>1</label>
    </ligand>
</feature>
<feature type="binding site" evidence="1">
    <location>
        <position position="67"/>
    </location>
    <ligand>
        <name>Na(+)</name>
        <dbReference type="ChEBI" id="CHEBI:29101"/>
        <label>1</label>
    </ligand>
</feature>
<feature type="binding site" description="type 2 copper site" evidence="1">
    <location>
        <position position="120"/>
    </location>
    <ligand>
        <name>Cu(2+)</name>
        <dbReference type="ChEBI" id="CHEBI:29036"/>
        <label>1</label>
    </ligand>
</feature>
<feature type="binding site" evidence="1">
    <location>
        <position position="120"/>
    </location>
    <ligand>
        <name>O2</name>
        <dbReference type="ChEBI" id="CHEBI:15379"/>
    </ligand>
</feature>
<feature type="binding site" description="type 3 copper site" evidence="1">
    <location>
        <position position="122"/>
    </location>
    <ligand>
        <name>Cu(2+)</name>
        <dbReference type="ChEBI" id="CHEBI:29036"/>
        <label>2</label>
    </ligand>
</feature>
<feature type="binding site" evidence="1">
    <location>
        <position position="128"/>
    </location>
    <ligand>
        <name>Ca(2+)</name>
        <dbReference type="ChEBI" id="CHEBI:29108"/>
    </ligand>
</feature>
<feature type="binding site" evidence="1">
    <location>
        <position position="143"/>
    </location>
    <ligand>
        <name>Ca(2+)</name>
        <dbReference type="ChEBI" id="CHEBI:29108"/>
    </ligand>
</feature>
<feature type="binding site" evidence="1">
    <location>
        <position position="146"/>
    </location>
    <ligand>
        <name>Ca(2+)</name>
        <dbReference type="ChEBI" id="CHEBI:29108"/>
    </ligand>
</feature>
<feature type="binding site" evidence="1">
    <location>
        <position position="147"/>
    </location>
    <ligand>
        <name>Ca(2+)</name>
        <dbReference type="ChEBI" id="CHEBI:29108"/>
    </ligand>
</feature>
<feature type="binding site" description="type 3 copper site" evidence="1">
    <location>
        <position position="179"/>
    </location>
    <ligand>
        <name>Cu(2+)</name>
        <dbReference type="ChEBI" id="CHEBI:29036"/>
        <label>2</label>
    </ligand>
</feature>
<feature type="binding site" evidence="1">
    <location>
        <position position="179"/>
    </location>
    <ligand>
        <name>O2</name>
        <dbReference type="ChEBI" id="CHEBI:15379"/>
    </ligand>
</feature>
<feature type="binding site" description="type 3 copper site" evidence="1">
    <location>
        <position position="181"/>
    </location>
    <ligand>
        <name>Cu(2+)</name>
        <dbReference type="ChEBI" id="CHEBI:29036"/>
        <label>3</label>
    </ligand>
</feature>
<feature type="binding site" evidence="1">
    <location>
        <position position="255"/>
    </location>
    <ligand>
        <name>Na(+)</name>
        <dbReference type="ChEBI" id="CHEBI:29101"/>
        <label>1</label>
    </ligand>
</feature>
<feature type="binding site" description="type 1 copper site" evidence="1">
    <location>
        <position position="294"/>
    </location>
    <ligand>
        <name>Cu(2+)</name>
        <dbReference type="ChEBI" id="CHEBI:29036"/>
        <label>4</label>
    </ligand>
</feature>
<feature type="binding site" description="type 1 copper site" evidence="1">
    <location>
        <position position="337"/>
    </location>
    <ligand>
        <name>Cu(2+)</name>
        <dbReference type="ChEBI" id="CHEBI:29036"/>
        <label>4</label>
    </ligand>
</feature>
<feature type="binding site" description="type 1 copper site" evidence="1">
    <location>
        <position position="342"/>
    </location>
    <ligand>
        <name>Cu(2+)</name>
        <dbReference type="ChEBI" id="CHEBI:29036"/>
        <label>4</label>
    </ligand>
</feature>
<feature type="binding site" evidence="1">
    <location>
        <position position="407"/>
    </location>
    <ligand>
        <name>Na(+)</name>
        <dbReference type="ChEBI" id="CHEBI:29101"/>
        <label>2</label>
    </ligand>
</feature>
<feature type="binding site" evidence="1">
    <location>
        <position position="416"/>
    </location>
    <ligand>
        <name>Na(+)</name>
        <dbReference type="ChEBI" id="CHEBI:29101"/>
        <label>2</label>
    </ligand>
</feature>
<feature type="binding site" evidence="1">
    <location>
        <position position="419"/>
    </location>
    <ligand>
        <name>Na(+)</name>
        <dbReference type="ChEBI" id="CHEBI:29101"/>
        <label>2</label>
    </ligand>
</feature>
<feature type="binding site" evidence="1">
    <location>
        <position position="611"/>
    </location>
    <ligand>
        <name>Na(+)</name>
        <dbReference type="ChEBI" id="CHEBI:29101"/>
        <label>2</label>
    </ligand>
</feature>
<feature type="binding site" description="type 1 copper site" evidence="1">
    <location>
        <position position="650"/>
    </location>
    <ligand>
        <name>Cu(2+)</name>
        <dbReference type="ChEBI" id="CHEBI:29036"/>
        <label>5</label>
    </ligand>
</feature>
<feature type="binding site" description="type 1 copper site" evidence="1">
    <location>
        <position position="693"/>
    </location>
    <ligand>
        <name>Cu(2+)</name>
        <dbReference type="ChEBI" id="CHEBI:29036"/>
        <label>5</label>
    </ligand>
</feature>
<feature type="binding site" description="type 1 copper site" evidence="1">
    <location>
        <position position="698"/>
    </location>
    <ligand>
        <name>Cu(2+)</name>
        <dbReference type="ChEBI" id="CHEBI:29036"/>
        <label>5</label>
    </ligand>
</feature>
<feature type="binding site" description="type 1 copper site" evidence="1">
    <location>
        <position position="703"/>
    </location>
    <ligand>
        <name>Cu(2+)</name>
        <dbReference type="ChEBI" id="CHEBI:29036"/>
        <label>5</label>
    </ligand>
</feature>
<feature type="binding site" evidence="1">
    <location>
        <position position="761"/>
    </location>
    <ligand>
        <name>Na(+)</name>
        <dbReference type="ChEBI" id="CHEBI:29101"/>
        <label>3</label>
    </ligand>
</feature>
<feature type="binding site" evidence="1">
    <location>
        <position position="770"/>
    </location>
    <ligand>
        <name>Na(+)</name>
        <dbReference type="ChEBI" id="CHEBI:29101"/>
        <label>3</label>
    </ligand>
</feature>
<feature type="binding site" evidence="1">
    <location>
        <position position="773"/>
    </location>
    <ligand>
        <name>Na(+)</name>
        <dbReference type="ChEBI" id="CHEBI:29101"/>
        <label>3</label>
    </ligand>
</feature>
<feature type="binding site" evidence="1">
    <location>
        <position position="949"/>
    </location>
    <ligand>
        <name>Na(+)</name>
        <dbReference type="ChEBI" id="CHEBI:29101"/>
        <label>3</label>
    </ligand>
</feature>
<feature type="binding site" description="type 1 copper site" evidence="1">
    <location>
        <position position="988"/>
    </location>
    <ligand>
        <name>Cu(2+)</name>
        <dbReference type="ChEBI" id="CHEBI:29036"/>
        <label>6</label>
    </ligand>
</feature>
<feature type="binding site" description="type 2 copper site" evidence="1">
    <location>
        <position position="991"/>
    </location>
    <ligand>
        <name>Cu(2+)</name>
        <dbReference type="ChEBI" id="CHEBI:29036"/>
        <label>1</label>
    </ligand>
</feature>
<feature type="binding site" evidence="1">
    <location>
        <position position="991"/>
    </location>
    <ligand>
        <name>O2</name>
        <dbReference type="ChEBI" id="CHEBI:15379"/>
    </ligand>
</feature>
<feature type="binding site" description="type 3 copper site" evidence="1">
    <location>
        <position position="993"/>
    </location>
    <ligand>
        <name>Cu(2+)</name>
        <dbReference type="ChEBI" id="CHEBI:29036"/>
        <label>3</label>
    </ligand>
</feature>
<feature type="binding site" evidence="1">
    <location>
        <position position="993"/>
    </location>
    <ligand>
        <name>O2</name>
        <dbReference type="ChEBI" id="CHEBI:15379"/>
    </ligand>
</feature>
<feature type="binding site" description="type 3 copper site" evidence="1">
    <location>
        <position position="1033"/>
    </location>
    <ligand>
        <name>Cu(2+)</name>
        <dbReference type="ChEBI" id="CHEBI:29036"/>
        <label>3</label>
    </ligand>
</feature>
<feature type="binding site" description="type 1 copper site" evidence="1">
    <location>
        <position position="1034"/>
    </location>
    <ligand>
        <name>Cu(2+)</name>
        <dbReference type="ChEBI" id="CHEBI:29036"/>
        <label>6</label>
    </ligand>
</feature>
<feature type="binding site" description="type 3 copper site" evidence="1">
    <location>
        <position position="1035"/>
    </location>
    <ligand>
        <name>Cu(2+)</name>
        <dbReference type="ChEBI" id="CHEBI:29036"/>
        <label>2</label>
    </ligand>
</feature>
<feature type="binding site" evidence="1">
    <location>
        <position position="1035"/>
    </location>
    <ligand>
        <name>O2</name>
        <dbReference type="ChEBI" id="CHEBI:15379"/>
    </ligand>
</feature>
<feature type="binding site" description="type 1 copper site" evidence="1">
    <location>
        <position position="1039"/>
    </location>
    <ligand>
        <name>Cu(2+)</name>
        <dbReference type="ChEBI" id="CHEBI:29036"/>
        <label>6</label>
    </ligand>
</feature>
<feature type="binding site" description="type 1 copper site" evidence="1">
    <location>
        <position position="1044"/>
    </location>
    <ligand>
        <name>Cu(2+)</name>
        <dbReference type="ChEBI" id="CHEBI:29036"/>
        <label>6</label>
    </ligand>
</feature>
<feature type="glycosylation site" description="N-linked (GlcNAc...) asparagine" evidence="2">
    <location>
        <position position="138"/>
    </location>
</feature>
<feature type="glycosylation site" description="N-linked (GlcNAc...) asparagine" evidence="2">
    <location>
        <position position="226"/>
    </location>
</feature>
<feature type="glycosylation site" description="N-linked (GlcNAc...) asparagine" evidence="2">
    <location>
        <position position="396"/>
    </location>
</feature>
<feature type="glycosylation site" description="N-linked (GlcNAc...) asparagine" evidence="2">
    <location>
        <position position="582"/>
    </location>
</feature>
<feature type="glycosylation site" description="N-linked (GlcNAc...) asparagine" evidence="2">
    <location>
        <position position="756"/>
    </location>
</feature>
<feature type="glycosylation site" description="N-linked (GlcNAc...) asparagine" evidence="2">
    <location>
        <position position="920"/>
    </location>
</feature>
<feature type="disulfide bond" evidence="1">
    <location>
        <begin position="173"/>
        <end position="199"/>
    </location>
</feature>
<feature type="disulfide bond" evidence="1">
    <location>
        <begin position="275"/>
        <end position="356"/>
    </location>
</feature>
<feature type="disulfide bond" evidence="1">
    <location>
        <begin position="528"/>
        <end position="554"/>
    </location>
</feature>
<feature type="disulfide bond" evidence="1">
    <location>
        <begin position="631"/>
        <end position="712"/>
    </location>
</feature>
<feature type="disulfide bond" evidence="1">
    <location>
        <begin position="868"/>
        <end position="894"/>
    </location>
</feature>
<feature type="sequence conflict" description="In Ref. 2; AAA40914." evidence="4" ref="2">
    <original>G</original>
    <variation>A</variation>
    <location>
        <position position="271"/>
    </location>
</feature>
<feature type="sequence conflict" description="In Ref. 2; AAA40914." evidence="4" ref="2">
    <original>ED</original>
    <variation>DN</variation>
    <location>
        <begin position="604"/>
        <end position="605"/>
    </location>
</feature>
<feature type="sequence conflict" description="In Ref. 2; AAA40915." evidence="4" ref="2">
    <original>T</original>
    <variation>S</variation>
    <location>
        <position position="823"/>
    </location>
</feature>
<feature type="sequence conflict" description="In Ref. 2; AAA40915." evidence="4" ref="2">
    <original>V</original>
    <variation>L</variation>
    <location>
        <position position="833"/>
    </location>
</feature>
<feature type="sequence conflict" description="In Ref. 2; AAA40915." evidence="4" ref="2">
    <original>C</original>
    <variation>V</variation>
    <location>
        <position position="868"/>
    </location>
</feature>
<feature type="sequence conflict" description="In Ref. 2; AAA40915." evidence="4" ref="2">
    <original>L</original>
    <variation>R</variation>
    <location>
        <position position="891"/>
    </location>
</feature>
<feature type="strand" evidence="5">
    <location>
        <begin position="21"/>
        <end position="34"/>
    </location>
</feature>
<feature type="turn" evidence="5">
    <location>
        <begin position="35"/>
        <end position="38"/>
    </location>
</feature>
<feature type="helix" evidence="5">
    <location>
        <begin position="49"/>
        <end position="56"/>
    </location>
</feature>
<feature type="strand" evidence="5">
    <location>
        <begin position="65"/>
        <end position="77"/>
    </location>
</feature>
<feature type="strand" evidence="5">
    <location>
        <begin position="82"/>
        <end position="84"/>
    </location>
</feature>
<feature type="helix" evidence="5">
    <location>
        <begin position="88"/>
        <end position="90"/>
    </location>
</feature>
<feature type="strand" evidence="5">
    <location>
        <begin position="97"/>
        <end position="100"/>
    </location>
</feature>
<feature type="strand" evidence="5">
    <location>
        <begin position="104"/>
        <end position="115"/>
    </location>
</feature>
<feature type="strand" evidence="5">
    <location>
        <begin position="120"/>
        <end position="125"/>
    </location>
</feature>
<feature type="helix" evidence="5">
    <location>
        <begin position="128"/>
        <end position="130"/>
    </location>
</feature>
<feature type="helix" evidence="6">
    <location>
        <begin position="141"/>
        <end position="143"/>
    </location>
</feature>
<feature type="turn" evidence="6">
    <location>
        <begin position="145"/>
        <end position="147"/>
    </location>
</feature>
<feature type="strand" evidence="5">
    <location>
        <begin position="154"/>
        <end position="160"/>
    </location>
</feature>
<feature type="strand" evidence="6">
    <location>
        <begin position="168"/>
        <end position="170"/>
    </location>
</feature>
<feature type="strand" evidence="5">
    <location>
        <begin position="172"/>
        <end position="179"/>
    </location>
</feature>
<feature type="strand" evidence="6">
    <location>
        <begin position="181"/>
        <end position="183"/>
    </location>
</feature>
<feature type="helix" evidence="5">
    <location>
        <begin position="184"/>
        <end position="190"/>
    </location>
</feature>
<feature type="strand" evidence="5">
    <location>
        <begin position="193"/>
        <end position="199"/>
    </location>
</feature>
<feature type="strand" evidence="5">
    <location>
        <begin position="213"/>
        <end position="224"/>
    </location>
</feature>
<feature type="turn" evidence="5">
    <location>
        <begin position="225"/>
        <end position="227"/>
    </location>
</feature>
<feature type="helix" evidence="5">
    <location>
        <begin position="231"/>
        <end position="238"/>
    </location>
</feature>
<feature type="helix" evidence="5">
    <location>
        <begin position="250"/>
        <end position="255"/>
    </location>
</feature>
<feature type="strand" evidence="5">
    <location>
        <begin position="257"/>
        <end position="261"/>
    </location>
</feature>
<feature type="turn" evidence="6">
    <location>
        <begin position="265"/>
        <end position="268"/>
    </location>
</feature>
<feature type="strand" evidence="5">
    <location>
        <begin position="273"/>
        <end position="275"/>
    </location>
</feature>
<feature type="strand" evidence="5">
    <location>
        <begin position="279"/>
        <end position="289"/>
    </location>
</feature>
<feature type="strand" evidence="5">
    <location>
        <begin position="294"/>
        <end position="298"/>
    </location>
</feature>
<feature type="strand" evidence="5">
    <location>
        <begin position="303"/>
        <end position="305"/>
    </location>
</feature>
<feature type="strand" evidence="5">
    <location>
        <begin position="308"/>
        <end position="311"/>
    </location>
</feature>
<feature type="strand" evidence="5">
    <location>
        <begin position="313"/>
        <end position="315"/>
    </location>
</feature>
<feature type="strand" evidence="5">
    <location>
        <begin position="320"/>
        <end position="326"/>
    </location>
</feature>
<feature type="strand" evidence="5">
    <location>
        <begin position="329"/>
        <end position="337"/>
    </location>
</feature>
<feature type="helix" evidence="5">
    <location>
        <begin position="340"/>
        <end position="343"/>
    </location>
</feature>
<feature type="turn" evidence="5">
    <location>
        <begin position="344"/>
        <end position="346"/>
    </location>
</feature>
<feature type="strand" evidence="5">
    <location>
        <begin position="348"/>
        <end position="354"/>
    </location>
</feature>
<feature type="strand" evidence="5">
    <location>
        <begin position="370"/>
        <end position="384"/>
    </location>
</feature>
<feature type="turn" evidence="5">
    <location>
        <begin position="391"/>
        <end position="393"/>
    </location>
</feature>
<feature type="helix" evidence="5">
    <location>
        <begin position="405"/>
        <end position="408"/>
    </location>
</feature>
<feature type="strand" evidence="5">
    <location>
        <begin position="411"/>
        <end position="413"/>
    </location>
</feature>
<feature type="strand" evidence="5">
    <location>
        <begin position="417"/>
        <end position="429"/>
    </location>
</feature>
<feature type="helix" evidence="5">
    <location>
        <begin position="443"/>
        <end position="445"/>
    </location>
</feature>
<feature type="strand" evidence="5">
    <location>
        <begin position="452"/>
        <end position="455"/>
    </location>
</feature>
<feature type="strand" evidence="5">
    <location>
        <begin position="459"/>
        <end position="466"/>
    </location>
</feature>
<feature type="strand" evidence="5">
    <location>
        <begin position="468"/>
        <end position="470"/>
    </location>
</feature>
<feature type="strand" evidence="5">
    <location>
        <begin position="475"/>
        <end position="480"/>
    </location>
</feature>
<feature type="helix" evidence="5">
    <location>
        <begin position="483"/>
        <end position="485"/>
    </location>
</feature>
<feature type="strand" evidence="5">
    <location>
        <begin position="491"/>
        <end position="494"/>
    </location>
</feature>
<feature type="turn" evidence="5">
    <location>
        <begin position="499"/>
        <end position="501"/>
    </location>
</feature>
<feature type="strand" evidence="5">
    <location>
        <begin position="508"/>
        <end position="514"/>
    </location>
</feature>
<feature type="helix" evidence="5">
    <location>
        <begin position="517"/>
        <end position="519"/>
    </location>
</feature>
<feature type="strand" evidence="5">
    <location>
        <begin position="527"/>
        <end position="534"/>
    </location>
</feature>
<feature type="helix" evidence="5">
    <location>
        <begin position="539"/>
        <end position="545"/>
    </location>
</feature>
<feature type="strand" evidence="5">
    <location>
        <begin position="548"/>
        <end position="554"/>
    </location>
</feature>
<feature type="strand" evidence="6">
    <location>
        <begin position="563"/>
        <end position="565"/>
    </location>
</feature>
<feature type="strand" evidence="5">
    <location>
        <begin position="569"/>
        <end position="580"/>
    </location>
</feature>
<feature type="helix" evidence="5">
    <location>
        <begin position="581"/>
        <end position="583"/>
    </location>
</feature>
<feature type="helix" evidence="5">
    <location>
        <begin position="587"/>
        <end position="594"/>
    </location>
</feature>
<feature type="turn" evidence="6">
    <location>
        <begin position="598"/>
        <end position="600"/>
    </location>
</feature>
<feature type="helix" evidence="5">
    <location>
        <begin position="606"/>
        <end position="611"/>
    </location>
</feature>
<feature type="strand" evidence="5">
    <location>
        <begin position="613"/>
        <end position="617"/>
    </location>
</feature>
<feature type="strand" evidence="5">
    <location>
        <begin position="629"/>
        <end position="631"/>
    </location>
</feature>
<feature type="strand" evidence="5">
    <location>
        <begin position="636"/>
        <end position="642"/>
    </location>
</feature>
<feature type="strand" evidence="5">
    <location>
        <begin position="650"/>
        <end position="654"/>
    </location>
</feature>
<feature type="strand" evidence="5">
    <location>
        <begin position="659"/>
        <end position="661"/>
    </location>
</feature>
<feature type="strand" evidence="5">
    <location>
        <begin position="664"/>
        <end position="671"/>
    </location>
</feature>
<feature type="strand" evidence="5">
    <location>
        <begin position="676"/>
        <end position="681"/>
    </location>
</feature>
<feature type="strand" evidence="5">
    <location>
        <begin position="687"/>
        <end position="693"/>
    </location>
</feature>
<feature type="helix" evidence="5">
    <location>
        <begin position="696"/>
        <end position="700"/>
    </location>
</feature>
<feature type="strand" evidence="5">
    <location>
        <begin position="704"/>
        <end position="710"/>
    </location>
</feature>
<feature type="strand" evidence="5">
    <location>
        <begin position="724"/>
        <end position="739"/>
    </location>
</feature>
<feature type="helix" evidence="5">
    <location>
        <begin position="744"/>
        <end position="753"/>
    </location>
</feature>
<feature type="turn" evidence="5">
    <location>
        <begin position="760"/>
        <end position="762"/>
    </location>
</feature>
<feature type="turn" evidence="5">
    <location>
        <begin position="765"/>
        <end position="767"/>
    </location>
</feature>
<feature type="strand" evidence="5">
    <location>
        <begin position="771"/>
        <end position="783"/>
    </location>
</feature>
<feature type="strand" evidence="6">
    <location>
        <begin position="787"/>
        <end position="789"/>
    </location>
</feature>
<feature type="turn" evidence="5">
    <location>
        <begin position="794"/>
        <end position="796"/>
    </location>
</feature>
<feature type="helix" evidence="5">
    <location>
        <begin position="797"/>
        <end position="799"/>
    </location>
</feature>
<feature type="strand" evidence="5">
    <location>
        <begin position="806"/>
        <end position="809"/>
    </location>
</feature>
<feature type="strand" evidence="5">
    <location>
        <begin position="813"/>
        <end position="824"/>
    </location>
</feature>
<feature type="strand" evidence="5">
    <location>
        <begin position="829"/>
        <end position="832"/>
    </location>
</feature>
<feature type="strand" evidence="5">
    <location>
        <begin position="836"/>
        <end position="838"/>
    </location>
</feature>
<feature type="strand" evidence="5">
    <location>
        <begin position="848"/>
        <end position="854"/>
    </location>
</feature>
<feature type="helix" evidence="5">
    <location>
        <begin position="857"/>
        <end position="859"/>
    </location>
</feature>
<feature type="strand" evidence="5">
    <location>
        <begin position="867"/>
        <end position="874"/>
    </location>
</feature>
<feature type="helix" evidence="5">
    <location>
        <begin position="879"/>
        <end position="885"/>
    </location>
</feature>
<feature type="strand" evidence="5">
    <location>
        <begin position="888"/>
        <end position="894"/>
    </location>
</feature>
<feature type="strand" evidence="5">
    <location>
        <begin position="907"/>
        <end position="918"/>
    </location>
</feature>
<feature type="helix" evidence="5">
    <location>
        <begin position="919"/>
        <end position="921"/>
    </location>
</feature>
<feature type="helix" evidence="5">
    <location>
        <begin position="925"/>
        <end position="932"/>
    </location>
</feature>
<feature type="helix" evidence="5">
    <location>
        <begin position="936"/>
        <end position="938"/>
    </location>
</feature>
<feature type="helix" evidence="5">
    <location>
        <begin position="944"/>
        <end position="949"/>
    </location>
</feature>
<feature type="strand" evidence="5">
    <location>
        <begin position="951"/>
        <end position="955"/>
    </location>
</feature>
<feature type="strand" evidence="5">
    <location>
        <begin position="967"/>
        <end position="969"/>
    </location>
</feature>
<feature type="strand" evidence="5">
    <location>
        <begin position="973"/>
        <end position="980"/>
    </location>
</feature>
<feature type="strand" evidence="6">
    <location>
        <begin position="982"/>
        <end position="985"/>
    </location>
</feature>
<feature type="strand" evidence="5">
    <location>
        <begin position="988"/>
        <end position="992"/>
    </location>
</feature>
<feature type="strand" evidence="5">
    <location>
        <begin position="997"/>
        <end position="1000"/>
    </location>
</feature>
<feature type="helix" evidence="5">
    <location>
        <begin position="1001"/>
        <end position="1003"/>
    </location>
</feature>
<feature type="strand" evidence="5">
    <location>
        <begin position="1005"/>
        <end position="1012"/>
    </location>
</feature>
<feature type="strand" evidence="5">
    <location>
        <begin position="1017"/>
        <end position="1022"/>
    </location>
</feature>
<feature type="strand" evidence="5">
    <location>
        <begin position="1028"/>
        <end position="1034"/>
    </location>
</feature>
<feature type="helix" evidence="5">
    <location>
        <begin position="1037"/>
        <end position="1041"/>
    </location>
</feature>
<feature type="strand" evidence="5">
    <location>
        <begin position="1045"/>
        <end position="1051"/>
    </location>
</feature>
<protein>
    <recommendedName>
        <fullName>Ceruloplasmin</fullName>
    </recommendedName>
    <alternativeName>
        <fullName>Cuproxidase ceruloplasmin</fullName>
        <ecNumber evidence="1">1.16.3.4</ecNumber>
    </alternativeName>
    <alternativeName>
        <fullName>Ferroxidase ceruloplasmin</fullName>
        <ecNumber evidence="1">1.16.3.1</ecNumber>
    </alternativeName>
    <alternativeName>
        <fullName>Glutathione peroxidase ceruloplasmin</fullName>
        <ecNumber evidence="1">1.11.1.9</ecNumber>
    </alternativeName>
    <alternativeName>
        <fullName>Glutathione-dependent peroxiredoxin ceruloplasmin</fullName>
        <ecNumber evidence="1">1.11.1.27</ecNumber>
    </alternativeName>
</protein>
<sequence>MKFLLLSALLFLHSSLAWTREKHYYIGITEAVWDYASGSEEKELISVDTEQSNFYLRNGPDRIGRKYKKALYSEYTDGTFTKTIDKPAWLGFLGPVIKAEVGDKVSVHVKNFASRPYTFHAHGVTYTKANEGAIYPDNTTDFQRADDKLFPGQQYLYVLRANEPSPGEGDSNCVTRIYHSHVDAPKDIASGLIGPLILCKKGSLHKEKEENIDQEFVLMFSVVDENLSWYLEDNIKTFCSEPEKVDKDNEDFQESNRMYSINGYTFGSLPGLSMCAEDRVKWYLFGMGNEVDVHSELFHGQALTSKNYHTDIINLFPATLIDVSMVAQNPGVWMLSCQNLNHLKAGLQAFFQVRDCNKPSPDDDIQDRHVRHYYIAAEETIWDYAPSGTDTFTGENFTSLGSDSRVFFEQGATRIGGSYKKLVYREYTDDSFTNRKERGPDEEHLGILGPVIWAEVGDIIRVTFHNKGQFPLSIQPMGVRFTKENEGTYYGPDGRSSKQASHVAPKETFTYEWTVPKEMGPTYADPVCLSKMYYSGVDLTKDIFTGLIGPMKICKKGSLLADGRQKDVDKEFYLFATVFDENESLLLDDNIRMFTTAPENVDKEDEDFQESNKMHSMNGFMYGNLPGLNMCLGESIVWYLFSAGNEADVHGIYFSGNTYLSKGERRDTANLFPHKSLTLLMTPDTEGSFDVECLTTDHYTGGMKQKYTVNQCKGQFEDVTLYQGERTYYIAAVEVEWDYSPSRDWEMELHHLQEQNVSNAFLDKEEFFIGSKYKKVVYREFTDSTFREQVKRRAEEEHLGMLGPLIHADVGAKVKVVFKNMATRPYSIHAHGVKTKSSTVAPTLPGEVRTYIWQIPERSGAGTEDSPCIPWAYYSTVDRVKDLYSGLIGPLIVCRKSYVKVFNPKKKMEFSLLFLVFDENESWYLDDNINTYPDHPEKDNKDNEEFIESNKMHAINGKMFGNLQGLTMHVGDEVNWYVMAMGNEIDLHTVHFHGHSFQYKHRGIHSSDVFDFFPGTYQTLEMFPQTPGTWLLHCHVTDHIHAGMVTTYTVLPNQETKSG</sequence>
<comment type="function">
    <text evidence="1 3">Multifunctional blue, copper-binding (6-7 atoms per molecule) glycoprotein. It has ferroxidase activity oxidizing Fe(2+) to Fe(3+) without releasing radical oxygen species. It is involved in iron transport across the cell membrane. Copper ions provide a large number of enzymatic activites. Oxidizes highly toxic ferrous ions to the ferric state for further incorporation onto apo-transferrins, catalyzes Cu(+) oxidation and promotes the oxidation of biogenic amines such as norepinephrin and serotonin (By similarity). Provides Cu(2+) ions for the ascorbate-mediated deaminase degradation of the heparan sulfate chains of GPC1 (PubMed:14707133). Has glutathione peroxidase-like activity, can remove both hydrogen peroxide and lipid hydroperoxide in the presence of thiols. Also shows NO-oxidase and NO2 synthase activities that determine endocrine NO homeostasis (By similarity).</text>
</comment>
<comment type="catalytic activity">
    <reaction evidence="1">
        <text>4 Fe(2+) + O2 + 4 H(+) = 4 Fe(3+) + 2 H2O</text>
        <dbReference type="Rhea" id="RHEA:11148"/>
        <dbReference type="ChEBI" id="CHEBI:15377"/>
        <dbReference type="ChEBI" id="CHEBI:15378"/>
        <dbReference type="ChEBI" id="CHEBI:15379"/>
        <dbReference type="ChEBI" id="CHEBI:29033"/>
        <dbReference type="ChEBI" id="CHEBI:29034"/>
        <dbReference type="EC" id="1.16.3.1"/>
    </reaction>
    <physiologicalReaction direction="right-to-left" evidence="1">
        <dbReference type="Rhea" id="RHEA:11150"/>
    </physiologicalReaction>
</comment>
<comment type="catalytic activity">
    <reaction evidence="1">
        <text>4 Cu(+) + O2 + 4 H(+) = 4 Cu(2+) + 2 H2O</text>
        <dbReference type="Rhea" id="RHEA:30083"/>
        <dbReference type="ChEBI" id="CHEBI:15377"/>
        <dbReference type="ChEBI" id="CHEBI:15378"/>
        <dbReference type="ChEBI" id="CHEBI:15379"/>
        <dbReference type="ChEBI" id="CHEBI:29036"/>
        <dbReference type="ChEBI" id="CHEBI:49552"/>
        <dbReference type="EC" id="1.16.3.4"/>
    </reaction>
    <physiologicalReaction direction="left-to-right" evidence="1">
        <dbReference type="Rhea" id="RHEA:30084"/>
    </physiologicalReaction>
</comment>
<comment type="catalytic activity">
    <reaction evidence="1">
        <text>a hydroperoxide + 2 glutathione = an alcohol + glutathione disulfide + H2O</text>
        <dbReference type="Rhea" id="RHEA:62632"/>
        <dbReference type="ChEBI" id="CHEBI:15377"/>
        <dbReference type="ChEBI" id="CHEBI:30879"/>
        <dbReference type="ChEBI" id="CHEBI:35924"/>
        <dbReference type="ChEBI" id="CHEBI:57925"/>
        <dbReference type="ChEBI" id="CHEBI:58297"/>
        <dbReference type="EC" id="1.11.1.27"/>
    </reaction>
    <physiologicalReaction direction="left-to-right" evidence="1">
        <dbReference type="Rhea" id="RHEA:62633"/>
    </physiologicalReaction>
</comment>
<comment type="catalytic activity">
    <reaction evidence="1">
        <text>4 nitric oxide + O2 + 2 H2O = 4 nitrite + 4 H(+)</text>
        <dbReference type="Rhea" id="RHEA:78539"/>
        <dbReference type="ChEBI" id="CHEBI:15377"/>
        <dbReference type="ChEBI" id="CHEBI:15378"/>
        <dbReference type="ChEBI" id="CHEBI:15379"/>
        <dbReference type="ChEBI" id="CHEBI:16301"/>
        <dbReference type="ChEBI" id="CHEBI:16480"/>
    </reaction>
    <physiologicalReaction direction="left-to-right" evidence="1">
        <dbReference type="Rhea" id="RHEA:78540"/>
    </physiologicalReaction>
</comment>
<comment type="catalytic activity">
    <reaction evidence="1">
        <text>2 glutathione + H2O2 = glutathione disulfide + 2 H2O</text>
        <dbReference type="Rhea" id="RHEA:16833"/>
        <dbReference type="ChEBI" id="CHEBI:15377"/>
        <dbReference type="ChEBI" id="CHEBI:16240"/>
        <dbReference type="ChEBI" id="CHEBI:57925"/>
        <dbReference type="ChEBI" id="CHEBI:58297"/>
        <dbReference type="EC" id="1.11.1.9"/>
    </reaction>
    <physiologicalReaction direction="left-to-right" evidence="1">
        <dbReference type="Rhea" id="RHEA:16834"/>
    </physiologicalReaction>
</comment>
<comment type="cofactor">
    <cofactor evidence="1">
        <name>Cu(2+)</name>
        <dbReference type="ChEBI" id="CHEBI:29036"/>
    </cofactor>
    <text evidence="1">Binds 6 Cu(2+) cations per monomer.</text>
</comment>
<comment type="subunit">
    <text evidence="1">Found in a complex with MPO and LTF; interacts directly with MPO and LTF, which allows Fe(3+) incorporation into LTF, activation of CP ferroxidase activity and protection of CP antioxidant properties by MPO.</text>
</comment>
<comment type="subcellular location">
    <subcellularLocation>
        <location evidence="3">Secreted</location>
    </subcellularLocation>
    <text evidence="3">Colocalizes with GCP1 in secretory intracellular compartments.</text>
</comment>
<comment type="tissue specificity">
    <text>Synthesized in liver and secreted into the plasma. Also choroid plexus, yolk sac, placenta, and testis; not in stomach and small intestine. Fetal lung and liver.</text>
</comment>
<comment type="induction">
    <text>By inflammation.</text>
</comment>
<comment type="similarity">
    <text evidence="4">Belongs to the multicopper oxidase family.</text>
</comment>
<comment type="sequence caution" evidence="4">
    <conflict type="miscellaneous discrepancy">
        <sequence resource="EMBL-CDS" id="AAA40914"/>
    </conflict>
    <text>Wrong order of assembly of the mRNA fragments.</text>
</comment>
<name>CERU_RAT</name>
<keyword id="KW-0002">3D-structure</keyword>
<keyword id="KW-0106">Calcium</keyword>
<keyword id="KW-1015">Disulfide bond</keyword>
<keyword id="KW-0325">Glycoprotein</keyword>
<keyword id="KW-0479">Metal-binding</keyword>
<keyword id="KW-0560">Oxidoreductase</keyword>
<keyword id="KW-1185">Reference proteome</keyword>
<keyword id="KW-0677">Repeat</keyword>
<keyword id="KW-0964">Secreted</keyword>
<keyword id="KW-0732">Signal</keyword>
<keyword id="KW-0915">Sodium</keyword>
<gene>
    <name type="primary">Cp</name>
</gene>
<reference key="1">
    <citation type="journal article" date="1990" name="J. Biol. Chem.">
        <title>Primary structure of rat ceruloplasmin and analysis of tissue-specific gene expression during development.</title>
        <authorList>
            <person name="Fleming R.E."/>
            <person name="Gitlin J.D."/>
        </authorList>
    </citation>
    <scope>NUCLEOTIDE SEQUENCE [GENOMIC DNA / MRNA]</scope>
    <source>
        <strain>Sprague-Dawley</strain>
        <tissue>Liver</tissue>
        <tissue>Lung</tissue>
    </source>
</reference>
<reference key="2">
    <citation type="journal article" date="1987" name="J. Biol. Chem.">
        <title>Rat ceruloplasmin. Molecular cloning and gene expression in liver, choroid plexus, yolk sac, placenta, and testis.</title>
        <authorList>
            <person name="Aldred A.R."/>
            <person name="Grimes A."/>
            <person name="Schreiber G."/>
            <person name="Mercer J.F.B."/>
        </authorList>
    </citation>
    <scope>NUCLEOTIDE SEQUENCE [MRNA] OF 257-294; 571-612 AND 823-892</scope>
    <source>
        <tissue>Liver</tissue>
    </source>
</reference>
<reference key="3">
    <citation type="journal article" date="2004" name="J. Biol. Chem.">
        <title>Involvement of glycosylphosphatidylinositol-linked ceruloplasmin in the copper/zinc-nitric oxide-dependent degradation of glypican-1 heparan sulfate in rat C6 glioma cells.</title>
        <authorList>
            <person name="Mani K."/>
            <person name="Cheng F."/>
            <person name="Havsmark B."/>
            <person name="David S."/>
            <person name="Fransson L.A."/>
        </authorList>
    </citation>
    <scope>COPPER-BINDING</scope>
    <scope>FUNCTION</scope>
    <scope>SUBCELLULAR LOCATION</scope>
</reference>
<proteinExistence type="evidence at protein level"/>
<accession>P13635</accession>
<accession>Q64719</accession>
<dbReference type="EC" id="1.16.3.4" evidence="1"/>
<dbReference type="EC" id="1.16.3.1" evidence="1"/>
<dbReference type="EC" id="1.11.1.9" evidence="1"/>
<dbReference type="EC" id="1.11.1.27" evidence="1"/>
<dbReference type="EMBL" id="L33869">
    <property type="protein sequence ID" value="AAA40917.1"/>
    <property type="molecule type" value="mRNA"/>
</dbReference>
<dbReference type="EMBL" id="M80529">
    <property type="protein sequence ID" value="AAB65820.1"/>
    <property type="molecule type" value="Genomic_DNA"/>
</dbReference>
<dbReference type="EMBL" id="J02670">
    <property type="protein sequence ID" value="AAA40914.1"/>
    <property type="status" value="ALT_SEQ"/>
    <property type="molecule type" value="mRNA"/>
</dbReference>
<dbReference type="EMBL" id="M14102">
    <property type="protein sequence ID" value="AAA40915.1"/>
    <property type="molecule type" value="mRNA"/>
</dbReference>
<dbReference type="PIR" id="A35210">
    <property type="entry name" value="A35210"/>
</dbReference>
<dbReference type="PDB" id="5N0K">
    <property type="method" value="X-ray"/>
    <property type="resolution" value="2.30 A"/>
    <property type="chains" value="A=1-1059"/>
</dbReference>
<dbReference type="PDB" id="5N4L">
    <property type="method" value="X-ray"/>
    <property type="resolution" value="3.20 A"/>
    <property type="chains" value="A/B=20-1053"/>
</dbReference>
<dbReference type="PDBsum" id="5N0K"/>
<dbReference type="PDBsum" id="5N4L"/>
<dbReference type="SMR" id="P13635"/>
<dbReference type="FunCoup" id="P13635">
    <property type="interactions" value="411"/>
</dbReference>
<dbReference type="IntAct" id="P13635">
    <property type="interactions" value="1"/>
</dbReference>
<dbReference type="STRING" id="10116.ENSRNOP00000075010"/>
<dbReference type="GlyCosmos" id="P13635">
    <property type="glycosylation" value="6 sites, No reported glycans"/>
</dbReference>
<dbReference type="GlyGen" id="P13635">
    <property type="glycosylation" value="6 sites"/>
</dbReference>
<dbReference type="iPTMnet" id="P13635"/>
<dbReference type="PhosphoSitePlus" id="P13635"/>
<dbReference type="jPOST" id="P13635"/>
<dbReference type="PaxDb" id="10116-ENSRNOP00000016083"/>
<dbReference type="UCSC" id="RGD:2387">
    <property type="organism name" value="rat"/>
</dbReference>
<dbReference type="AGR" id="RGD:2387"/>
<dbReference type="RGD" id="2387">
    <property type="gene designation" value="Cp"/>
</dbReference>
<dbReference type="eggNOG" id="KOG1263">
    <property type="taxonomic scope" value="Eukaryota"/>
</dbReference>
<dbReference type="InParanoid" id="P13635"/>
<dbReference type="BRENDA" id="1.16.3.1">
    <property type="organism ID" value="5301"/>
</dbReference>
<dbReference type="Reactome" id="R-RNO-381426">
    <property type="pathway name" value="Regulation of Insulin-like Growth Factor (IGF) transport and uptake by Insulin-like Growth Factor Binding Proteins (IGFBPs)"/>
</dbReference>
<dbReference type="Reactome" id="R-RNO-425410">
    <property type="pathway name" value="Metal ion SLC transporters"/>
</dbReference>
<dbReference type="Reactome" id="R-RNO-8957275">
    <property type="pathway name" value="Post-translational protein phosphorylation"/>
</dbReference>
<dbReference type="Reactome" id="R-RNO-917937">
    <property type="pathway name" value="Iron uptake and transport"/>
</dbReference>
<dbReference type="PRO" id="PR:P13635"/>
<dbReference type="Proteomes" id="UP000002494">
    <property type="component" value="Unplaced"/>
</dbReference>
<dbReference type="GO" id="GO:0009986">
    <property type="term" value="C:cell surface"/>
    <property type="evidence" value="ECO:0000314"/>
    <property type="project" value="RGD"/>
</dbReference>
<dbReference type="GO" id="GO:0005615">
    <property type="term" value="C:extracellular space"/>
    <property type="evidence" value="ECO:0000314"/>
    <property type="project" value="RGD"/>
</dbReference>
<dbReference type="GO" id="GO:0005886">
    <property type="term" value="C:plasma membrane"/>
    <property type="evidence" value="ECO:0000318"/>
    <property type="project" value="GO_Central"/>
</dbReference>
<dbReference type="GO" id="GO:0005507">
    <property type="term" value="F:copper ion binding"/>
    <property type="evidence" value="ECO:0000314"/>
    <property type="project" value="RGD"/>
</dbReference>
<dbReference type="GO" id="GO:0004322">
    <property type="term" value="F:ferroxidase activity"/>
    <property type="evidence" value="ECO:0000250"/>
    <property type="project" value="UniProtKB"/>
</dbReference>
<dbReference type="GO" id="GO:0004602">
    <property type="term" value="F:glutathione peroxidase activity"/>
    <property type="evidence" value="ECO:0000250"/>
    <property type="project" value="UniProtKB"/>
</dbReference>
<dbReference type="GO" id="GO:0016491">
    <property type="term" value="F:oxidoreductase activity"/>
    <property type="evidence" value="ECO:0000318"/>
    <property type="project" value="GO_Central"/>
</dbReference>
<dbReference type="GO" id="GO:0016724">
    <property type="term" value="F:oxidoreductase activity, acting on metal ions, oxygen as acceptor"/>
    <property type="evidence" value="ECO:0000250"/>
    <property type="project" value="UniProtKB"/>
</dbReference>
<dbReference type="GO" id="GO:0047066">
    <property type="term" value="F:phospholipid-hydroperoxide glutathione peroxidase activity"/>
    <property type="evidence" value="ECO:0000250"/>
    <property type="project" value="UniProtKB"/>
</dbReference>
<dbReference type="GO" id="GO:0051087">
    <property type="term" value="F:protein-folding chaperone binding"/>
    <property type="evidence" value="ECO:0000266"/>
    <property type="project" value="RGD"/>
</dbReference>
<dbReference type="GO" id="GO:0007565">
    <property type="term" value="P:female pregnancy"/>
    <property type="evidence" value="ECO:0000270"/>
    <property type="project" value="RGD"/>
</dbReference>
<dbReference type="GO" id="GO:0006878">
    <property type="term" value="P:intracellular copper ion homeostasis"/>
    <property type="evidence" value="ECO:0000250"/>
    <property type="project" value="UniProtKB"/>
</dbReference>
<dbReference type="GO" id="GO:0006879">
    <property type="term" value="P:intracellular iron ion homeostasis"/>
    <property type="evidence" value="ECO:0000250"/>
    <property type="project" value="UniProtKB"/>
</dbReference>
<dbReference type="GO" id="GO:0007595">
    <property type="term" value="P:lactation"/>
    <property type="evidence" value="ECO:0000270"/>
    <property type="project" value="RGD"/>
</dbReference>
<dbReference type="GO" id="GO:0001889">
    <property type="term" value="P:liver development"/>
    <property type="evidence" value="ECO:0000270"/>
    <property type="project" value="RGD"/>
</dbReference>
<dbReference type="GO" id="GO:0030324">
    <property type="term" value="P:lung development"/>
    <property type="evidence" value="ECO:0000270"/>
    <property type="project" value="RGD"/>
</dbReference>
<dbReference type="GO" id="GO:0060056">
    <property type="term" value="P:mammary gland involution"/>
    <property type="evidence" value="ECO:0000270"/>
    <property type="project" value="RGD"/>
</dbReference>
<dbReference type="GO" id="GO:0015679">
    <property type="term" value="P:plasma membrane copper ion transport"/>
    <property type="evidence" value="ECO:0000304"/>
    <property type="project" value="RGD"/>
</dbReference>
<dbReference type="GO" id="GO:0046688">
    <property type="term" value="P:response to copper ion"/>
    <property type="evidence" value="ECO:0000314"/>
    <property type="project" value="RGD"/>
</dbReference>
<dbReference type="GO" id="GO:0007584">
    <property type="term" value="P:response to nutrient"/>
    <property type="evidence" value="ECO:0000270"/>
    <property type="project" value="RGD"/>
</dbReference>
<dbReference type="CDD" id="cd11021">
    <property type="entry name" value="CuRO_2_ceruloplasmin"/>
    <property type="match status" value="1"/>
</dbReference>
<dbReference type="CDD" id="cd11022">
    <property type="entry name" value="CuRO_4_ceruloplasmin"/>
    <property type="match status" value="1"/>
</dbReference>
<dbReference type="CDD" id="cd04225">
    <property type="entry name" value="CuRO_5_ceruloplasmin"/>
    <property type="match status" value="1"/>
</dbReference>
<dbReference type="FunFam" id="2.60.40.420:FF:000009">
    <property type="entry name" value="Ceruloplasmin"/>
    <property type="match status" value="1"/>
</dbReference>
<dbReference type="FunFam" id="2.60.40.420:FF:000015">
    <property type="entry name" value="Ceruloplasmin"/>
    <property type="match status" value="1"/>
</dbReference>
<dbReference type="FunFam" id="2.60.40.420:FF:000028">
    <property type="entry name" value="Ceruloplasmin"/>
    <property type="match status" value="1"/>
</dbReference>
<dbReference type="FunFam" id="2.60.40.420:FF:000033">
    <property type="entry name" value="Ceruloplasmin"/>
    <property type="match status" value="1"/>
</dbReference>
<dbReference type="FunFam" id="2.60.40.420:FF:000037">
    <property type="entry name" value="Ceruloplasmin"/>
    <property type="match status" value="1"/>
</dbReference>
<dbReference type="Gene3D" id="2.60.40.420">
    <property type="entry name" value="Cupredoxins - blue copper proteins"/>
    <property type="match status" value="5"/>
</dbReference>
<dbReference type="InterPro" id="IPR048236">
    <property type="entry name" value="Ceruloplasmin-like_CuRO_5"/>
</dbReference>
<dbReference type="InterPro" id="IPR011707">
    <property type="entry name" value="Cu-oxidase-like_N"/>
</dbReference>
<dbReference type="InterPro" id="IPR001117">
    <property type="entry name" value="Cu-oxidase_2nd"/>
</dbReference>
<dbReference type="InterPro" id="IPR011706">
    <property type="entry name" value="Cu-oxidase_C"/>
</dbReference>
<dbReference type="InterPro" id="IPR045087">
    <property type="entry name" value="Cu-oxidase_fam"/>
</dbReference>
<dbReference type="InterPro" id="IPR033138">
    <property type="entry name" value="Cu_oxidase_CS"/>
</dbReference>
<dbReference type="InterPro" id="IPR002355">
    <property type="entry name" value="Cu_oxidase_Cu_BS"/>
</dbReference>
<dbReference type="InterPro" id="IPR008972">
    <property type="entry name" value="Cupredoxin"/>
</dbReference>
<dbReference type="InterPro" id="IPR024715">
    <property type="entry name" value="Factor_5/8-like"/>
</dbReference>
<dbReference type="PANTHER" id="PTHR11709:SF226">
    <property type="entry name" value="CERULOPLASMIN"/>
    <property type="match status" value="1"/>
</dbReference>
<dbReference type="PANTHER" id="PTHR11709">
    <property type="entry name" value="MULTI-COPPER OXIDASE"/>
    <property type="match status" value="1"/>
</dbReference>
<dbReference type="Pfam" id="PF00394">
    <property type="entry name" value="Cu-oxidase"/>
    <property type="match status" value="1"/>
</dbReference>
<dbReference type="Pfam" id="PF07731">
    <property type="entry name" value="Cu-oxidase_2"/>
    <property type="match status" value="1"/>
</dbReference>
<dbReference type="Pfam" id="PF07732">
    <property type="entry name" value="Cu-oxidase_3"/>
    <property type="match status" value="3"/>
</dbReference>
<dbReference type="PIRSF" id="PIRSF000354">
    <property type="entry name" value="Factors_V_VIII"/>
    <property type="match status" value="1"/>
</dbReference>
<dbReference type="SUPFAM" id="SSF49503">
    <property type="entry name" value="Cupredoxins"/>
    <property type="match status" value="6"/>
</dbReference>
<dbReference type="PROSITE" id="PS00079">
    <property type="entry name" value="MULTICOPPER_OXIDASE1"/>
    <property type="match status" value="3"/>
</dbReference>
<dbReference type="PROSITE" id="PS00080">
    <property type="entry name" value="MULTICOPPER_OXIDASE2"/>
    <property type="match status" value="1"/>
</dbReference>